<protein>
    <recommendedName>
        <fullName>Uncharacterized protein MJ1608</fullName>
    </recommendedName>
</protein>
<accession>Q59003</accession>
<gene>
    <name type="ordered locus">MJ1608</name>
</gene>
<proteinExistence type="predicted"/>
<organism>
    <name type="scientific">Methanocaldococcus jannaschii (strain ATCC 43067 / DSM 2661 / JAL-1 / JCM 10045 / NBRC 100440)</name>
    <name type="common">Methanococcus jannaschii</name>
    <dbReference type="NCBI Taxonomy" id="243232"/>
    <lineage>
        <taxon>Archaea</taxon>
        <taxon>Methanobacteriati</taxon>
        <taxon>Methanobacteriota</taxon>
        <taxon>Methanomada group</taxon>
        <taxon>Methanococci</taxon>
        <taxon>Methanococcales</taxon>
        <taxon>Methanocaldococcaceae</taxon>
        <taxon>Methanocaldococcus</taxon>
    </lineage>
</organism>
<dbReference type="EMBL" id="L77117">
    <property type="protein sequence ID" value="AAB99635.1"/>
    <property type="molecule type" value="Genomic_DNA"/>
</dbReference>
<dbReference type="PIR" id="G64500">
    <property type="entry name" value="G64500"/>
</dbReference>
<dbReference type="RefSeq" id="WP_010871133.1">
    <property type="nucleotide sequence ID" value="NC_000909.1"/>
</dbReference>
<dbReference type="SMR" id="Q59003"/>
<dbReference type="STRING" id="243232.MJ_1608"/>
<dbReference type="PaxDb" id="243232-MJ_1608"/>
<dbReference type="EnsemblBacteria" id="AAB99635">
    <property type="protein sequence ID" value="AAB99635"/>
    <property type="gene ID" value="MJ_1608"/>
</dbReference>
<dbReference type="GeneID" id="1452517"/>
<dbReference type="KEGG" id="mja:MJ_1608"/>
<dbReference type="eggNOG" id="arCOG05093">
    <property type="taxonomic scope" value="Archaea"/>
</dbReference>
<dbReference type="HOGENOM" id="CLU_175324_2_1_2"/>
<dbReference type="InParanoid" id="Q59003"/>
<dbReference type="OrthoDB" id="122350at2157"/>
<dbReference type="Proteomes" id="UP000000805">
    <property type="component" value="Chromosome"/>
</dbReference>
<dbReference type="Gene3D" id="1.10.10.10">
    <property type="entry name" value="Winged helix-like DNA-binding domain superfamily/Winged helix DNA-binding domain"/>
    <property type="match status" value="1"/>
</dbReference>
<dbReference type="InterPro" id="IPR019707">
    <property type="entry name" value="DUF2582"/>
</dbReference>
<dbReference type="InterPro" id="IPR036388">
    <property type="entry name" value="WH-like_DNA-bd_sf"/>
</dbReference>
<dbReference type="Pfam" id="PF10771">
    <property type="entry name" value="DUF2582"/>
    <property type="match status" value="1"/>
</dbReference>
<name>Y1608_METJA</name>
<feature type="chain" id="PRO_0000107435" description="Uncharacterized protein MJ1608">
    <location>
        <begin position="1"/>
        <end position="70"/>
    </location>
</feature>
<reference key="1">
    <citation type="journal article" date="1996" name="Science">
        <title>Complete genome sequence of the methanogenic archaeon, Methanococcus jannaschii.</title>
        <authorList>
            <person name="Bult C.J."/>
            <person name="White O."/>
            <person name="Olsen G.J."/>
            <person name="Zhou L."/>
            <person name="Fleischmann R.D."/>
            <person name="Sutton G.G."/>
            <person name="Blake J.A."/>
            <person name="FitzGerald L.M."/>
            <person name="Clayton R.A."/>
            <person name="Gocayne J.D."/>
            <person name="Kerlavage A.R."/>
            <person name="Dougherty B.A."/>
            <person name="Tomb J.-F."/>
            <person name="Adams M.D."/>
            <person name="Reich C.I."/>
            <person name="Overbeek R."/>
            <person name="Kirkness E.F."/>
            <person name="Weinstock K.G."/>
            <person name="Merrick J.M."/>
            <person name="Glodek A."/>
            <person name="Scott J.L."/>
            <person name="Geoghagen N.S.M."/>
            <person name="Weidman J.F."/>
            <person name="Fuhrmann J.L."/>
            <person name="Nguyen D."/>
            <person name="Utterback T.R."/>
            <person name="Kelley J.M."/>
            <person name="Peterson J.D."/>
            <person name="Sadow P.W."/>
            <person name="Hanna M.C."/>
            <person name="Cotton M.D."/>
            <person name="Roberts K.M."/>
            <person name="Hurst M.A."/>
            <person name="Kaine B.P."/>
            <person name="Borodovsky M."/>
            <person name="Klenk H.-P."/>
            <person name="Fraser C.M."/>
            <person name="Smith H.O."/>
            <person name="Woese C.R."/>
            <person name="Venter J.C."/>
        </authorList>
    </citation>
    <scope>NUCLEOTIDE SEQUENCE [LARGE SCALE GENOMIC DNA]</scope>
    <source>
        <strain>ATCC 43067 / DSM 2661 / JAL-1 / JCM 10045 / NBRC 100440</strain>
    </source>
</reference>
<keyword id="KW-1185">Reference proteome</keyword>
<sequence>MEDMWGKIGETAGKIYHLLEGGEKSLSQIEKILRKEGYNSNIVKMAIGWLAREDKIFVLKDDKKWVIKLK</sequence>